<keyword id="KW-0967">Endosome</keyword>
<keyword id="KW-0446">Lipid-binding</keyword>
<keyword id="KW-0472">Membrane</keyword>
<keyword id="KW-0597">Phosphoprotein</keyword>
<keyword id="KW-0653">Protein transport</keyword>
<keyword id="KW-1267">Proteomics identification</keyword>
<keyword id="KW-1185">Reference proteome</keyword>
<keyword id="KW-0813">Transport</keyword>
<protein>
    <recommendedName>
        <fullName>Sorting nexin-8</fullName>
    </recommendedName>
</protein>
<organism>
    <name type="scientific">Homo sapiens</name>
    <name type="common">Human</name>
    <dbReference type="NCBI Taxonomy" id="9606"/>
    <lineage>
        <taxon>Eukaryota</taxon>
        <taxon>Metazoa</taxon>
        <taxon>Chordata</taxon>
        <taxon>Craniata</taxon>
        <taxon>Vertebrata</taxon>
        <taxon>Euteleostomi</taxon>
        <taxon>Mammalia</taxon>
        <taxon>Eutheria</taxon>
        <taxon>Euarchontoglires</taxon>
        <taxon>Primates</taxon>
        <taxon>Haplorrhini</taxon>
        <taxon>Catarrhini</taxon>
        <taxon>Hominidae</taxon>
        <taxon>Homo</taxon>
    </lineage>
</organism>
<proteinExistence type="evidence at protein level"/>
<feature type="chain" id="PRO_0000213851" description="Sorting nexin-8">
    <location>
        <begin position="1"/>
        <end position="465"/>
    </location>
</feature>
<feature type="domain" description="PX" evidence="2">
    <location>
        <begin position="73"/>
        <end position="181"/>
    </location>
</feature>
<feature type="region of interest" description="Disordered" evidence="3">
    <location>
        <begin position="1"/>
        <end position="36"/>
    </location>
</feature>
<feature type="compositionally biased region" description="Low complexity" evidence="3">
    <location>
        <begin position="1"/>
        <end position="19"/>
    </location>
</feature>
<feature type="binding site" evidence="1">
    <location>
        <position position="109"/>
    </location>
    <ligand>
        <name>a 1,2-diacyl-sn-glycero-3-phospho-(1D-myo-inositol-3-phosphate)</name>
        <dbReference type="ChEBI" id="CHEBI:58088"/>
    </ligand>
</feature>
<feature type="binding site" evidence="1">
    <location>
        <position position="135"/>
    </location>
    <ligand>
        <name>a 1,2-diacyl-sn-glycero-3-phospho-(1D-myo-inositol-3-phosphate)</name>
        <dbReference type="ChEBI" id="CHEBI:58088"/>
    </ligand>
</feature>
<feature type="binding site" evidence="1">
    <location>
        <position position="148"/>
    </location>
    <ligand>
        <name>a 1,2-diacyl-sn-glycero-3-phospho-(1D-myo-inositol-3-phosphate)</name>
        <dbReference type="ChEBI" id="CHEBI:58088"/>
    </ligand>
</feature>
<feature type="modified residue" description="Phosphothreonine" evidence="7">
    <location>
        <position position="452"/>
    </location>
</feature>
<feature type="modified residue" description="Phosphoserine" evidence="7">
    <location>
        <position position="456"/>
    </location>
</feature>
<feature type="sequence variant" id="VAR_036259" description="In a colorectal cancer sample; somatic mutation." evidence="4">
    <original>A</original>
    <variation>G</variation>
    <location>
        <position position="147"/>
    </location>
</feature>
<sequence length="465" mass="52569">MTGRAMDPLPAAAVGAAAEAEADEEADPPASDLPTPQAIEPQAIVQQVPAPSRMQMPQGNPLLLSHTLQELLARDTVQVELIPEKKGLFLKHVEYEVSSQRFKSSVYRRYNDFVVFQEMLLHKFPYRMVPALPPKRMLGADREFIEARRRALKRFVNLVARHPLFSEDVVLKLFLSFSGSDVQNKLKESAQCVGDEFLNCKLATRAKDFLPADIQAQFAISRELIRNIYNSFHKLRDRAERIASRAIDNAADLLIFGKELSAIGSDTTPLPSWAALNSSTWGSLKQALKGLSVEFALLADKAAQQGKQEENDVVEKLNLFLDLLQSYKDLCERHEKGVLHKHQRALHKYSLMKRQMMSATAQNREPESVEQLESRIVEQENAIQTMELRNYFSLYCLHQETQLIHVYLPLTSHILRAFVNSQIQGHKEMSKVWNDLRPKLSCLFAGPHSTLTPPCSPPEDGLCPH</sequence>
<reference key="1">
    <citation type="journal article" date="2001" name="Biochem. J.">
        <title>A large family of endosome-localized proteins related to sorting nexin 1.</title>
        <authorList>
            <person name="Teasdale R.D."/>
            <person name="Loci D."/>
            <person name="Houghton F."/>
            <person name="Karlsson L."/>
            <person name="Gleeson P.A."/>
        </authorList>
    </citation>
    <scope>NUCLEOTIDE SEQUENCE [MRNA]</scope>
</reference>
<reference key="2">
    <citation type="journal article" date="2003" name="Science">
        <title>Human chromosome 7: DNA sequence and biology.</title>
        <authorList>
            <person name="Scherer S.W."/>
            <person name="Cheung J."/>
            <person name="MacDonald J.R."/>
            <person name="Osborne L.R."/>
            <person name="Nakabayashi K."/>
            <person name="Herbrick J.-A."/>
            <person name="Carson A.R."/>
            <person name="Parker-Katiraee L."/>
            <person name="Skaug J."/>
            <person name="Khaja R."/>
            <person name="Zhang J."/>
            <person name="Hudek A.K."/>
            <person name="Li M."/>
            <person name="Haddad M."/>
            <person name="Duggan G.E."/>
            <person name="Fernandez B.A."/>
            <person name="Kanematsu E."/>
            <person name="Gentles S."/>
            <person name="Christopoulos C.C."/>
            <person name="Choufani S."/>
            <person name="Kwasnicka D."/>
            <person name="Zheng X.H."/>
            <person name="Lai Z."/>
            <person name="Nusskern D.R."/>
            <person name="Zhang Q."/>
            <person name="Gu Z."/>
            <person name="Lu F."/>
            <person name="Zeesman S."/>
            <person name="Nowaczyk M.J."/>
            <person name="Teshima I."/>
            <person name="Chitayat D."/>
            <person name="Shuman C."/>
            <person name="Weksberg R."/>
            <person name="Zackai E.H."/>
            <person name="Grebe T.A."/>
            <person name="Cox S.R."/>
            <person name="Kirkpatrick S.J."/>
            <person name="Rahman N."/>
            <person name="Friedman J.M."/>
            <person name="Heng H.H.Q."/>
            <person name="Pelicci P.G."/>
            <person name="Lo-Coco F."/>
            <person name="Belloni E."/>
            <person name="Shaffer L.G."/>
            <person name="Pober B."/>
            <person name="Morton C.C."/>
            <person name="Gusella J.F."/>
            <person name="Bruns G.A.P."/>
            <person name="Korf B.R."/>
            <person name="Quade B.J."/>
            <person name="Ligon A.H."/>
            <person name="Ferguson H."/>
            <person name="Higgins A.W."/>
            <person name="Leach N.T."/>
            <person name="Herrick S.R."/>
            <person name="Lemyre E."/>
            <person name="Farra C.G."/>
            <person name="Kim H.-G."/>
            <person name="Summers A.M."/>
            <person name="Gripp K.W."/>
            <person name="Roberts W."/>
            <person name="Szatmari P."/>
            <person name="Winsor E.J.T."/>
            <person name="Grzeschik K.-H."/>
            <person name="Teebi A."/>
            <person name="Minassian B.A."/>
            <person name="Kere J."/>
            <person name="Armengol L."/>
            <person name="Pujana M.A."/>
            <person name="Estivill X."/>
            <person name="Wilson M.D."/>
            <person name="Koop B.F."/>
            <person name="Tosi S."/>
            <person name="Moore G.E."/>
            <person name="Boright A.P."/>
            <person name="Zlotorynski E."/>
            <person name="Kerem B."/>
            <person name="Kroisel P.M."/>
            <person name="Petek E."/>
            <person name="Oscier D.G."/>
            <person name="Mould S.J."/>
            <person name="Doehner H."/>
            <person name="Doehner K."/>
            <person name="Rommens J.M."/>
            <person name="Vincent J.B."/>
            <person name="Venter J.C."/>
            <person name="Li P.W."/>
            <person name="Mural R.J."/>
            <person name="Adams M.D."/>
            <person name="Tsui L.-C."/>
        </authorList>
    </citation>
    <scope>NUCLEOTIDE SEQUENCE [LARGE SCALE GENOMIC DNA]</scope>
</reference>
<reference key="3">
    <citation type="submission" date="2005-07" db="EMBL/GenBank/DDBJ databases">
        <authorList>
            <person name="Mural R.J."/>
            <person name="Istrail S."/>
            <person name="Sutton G.G."/>
            <person name="Florea L."/>
            <person name="Halpern A.L."/>
            <person name="Mobarry C.M."/>
            <person name="Lippert R."/>
            <person name="Walenz B."/>
            <person name="Shatkay H."/>
            <person name="Dew I."/>
            <person name="Miller J.R."/>
            <person name="Flanigan M.J."/>
            <person name="Edwards N.J."/>
            <person name="Bolanos R."/>
            <person name="Fasulo D."/>
            <person name="Halldorsson B.V."/>
            <person name="Hannenhalli S."/>
            <person name="Turner R."/>
            <person name="Yooseph S."/>
            <person name="Lu F."/>
            <person name="Nusskern D.R."/>
            <person name="Shue B.C."/>
            <person name="Zheng X.H."/>
            <person name="Zhong F."/>
            <person name="Delcher A.L."/>
            <person name="Huson D.H."/>
            <person name="Kravitz S.A."/>
            <person name="Mouchard L."/>
            <person name="Reinert K."/>
            <person name="Remington K.A."/>
            <person name="Clark A.G."/>
            <person name="Waterman M.S."/>
            <person name="Eichler E.E."/>
            <person name="Adams M.D."/>
            <person name="Hunkapiller M.W."/>
            <person name="Myers E.W."/>
            <person name="Venter J.C."/>
        </authorList>
    </citation>
    <scope>NUCLEOTIDE SEQUENCE [LARGE SCALE GENOMIC DNA]</scope>
</reference>
<reference key="4">
    <citation type="journal article" date="2004" name="Genome Res.">
        <title>The status, quality, and expansion of the NIH full-length cDNA project: the Mammalian Gene Collection (MGC).</title>
        <authorList>
            <consortium name="The MGC Project Team"/>
        </authorList>
    </citation>
    <scope>NUCLEOTIDE SEQUENCE [LARGE SCALE MRNA]</scope>
    <source>
        <tissue>Kidney</tissue>
        <tissue>Lung</tissue>
    </source>
</reference>
<reference key="5">
    <citation type="journal article" date="2008" name="Proc. Natl. Acad. Sci. U.S.A.">
        <title>A quantitative atlas of mitotic phosphorylation.</title>
        <authorList>
            <person name="Dephoure N."/>
            <person name="Zhou C."/>
            <person name="Villen J."/>
            <person name="Beausoleil S.A."/>
            <person name="Bakalarski C.E."/>
            <person name="Elledge S.J."/>
            <person name="Gygi S.P."/>
        </authorList>
    </citation>
    <scope>PHOSPHORYLATION [LARGE SCALE ANALYSIS] AT THR-452 AND SER-456</scope>
    <scope>IDENTIFICATION BY MASS SPECTROMETRY [LARGE SCALE ANALYSIS]</scope>
    <source>
        <tissue>Cervix carcinoma</tissue>
    </source>
</reference>
<reference key="6">
    <citation type="journal article" date="2009" name="Biochem. Biophys. Res. Commun.">
        <title>Sorting nexin 8 regulates endosome-to-Golgi transport.</title>
        <authorList>
            <person name="Dyve A.B."/>
            <person name="Bergan J."/>
            <person name="Utskarpen A."/>
            <person name="Sandvig K."/>
        </authorList>
    </citation>
    <scope>FUNCTION</scope>
    <scope>SUBCELLULAR LOCATION</scope>
</reference>
<reference key="7">
    <citation type="journal article" date="2011" name="BMC Syst. Biol.">
        <title>Initial characterization of the human central proteome.</title>
        <authorList>
            <person name="Burkard T.R."/>
            <person name="Planyavsky M."/>
            <person name="Kaupe I."/>
            <person name="Breitwieser F.P."/>
            <person name="Buerckstuemmer T."/>
            <person name="Bennett K.L."/>
            <person name="Superti-Furga G."/>
            <person name="Colinge J."/>
        </authorList>
    </citation>
    <scope>IDENTIFICATION BY MASS SPECTROMETRY [LARGE SCALE ANALYSIS]</scope>
</reference>
<reference key="8">
    <citation type="journal article" date="2006" name="Science">
        <title>The consensus coding sequences of human breast and colorectal cancers.</title>
        <authorList>
            <person name="Sjoeblom T."/>
            <person name="Jones S."/>
            <person name="Wood L.D."/>
            <person name="Parsons D.W."/>
            <person name="Lin J."/>
            <person name="Barber T.D."/>
            <person name="Mandelker D."/>
            <person name="Leary R.J."/>
            <person name="Ptak J."/>
            <person name="Silliman N."/>
            <person name="Szabo S."/>
            <person name="Buckhaults P."/>
            <person name="Farrell C."/>
            <person name="Meeh P."/>
            <person name="Markowitz S.D."/>
            <person name="Willis J."/>
            <person name="Dawson D."/>
            <person name="Willson J.K.V."/>
            <person name="Gazdar A.F."/>
            <person name="Hartigan J."/>
            <person name="Wu L."/>
            <person name="Liu C."/>
            <person name="Parmigiani G."/>
            <person name="Park B.H."/>
            <person name="Bachman K.E."/>
            <person name="Papadopoulos N."/>
            <person name="Vogelstein B."/>
            <person name="Kinzler K.W."/>
            <person name="Velculescu V.E."/>
        </authorList>
    </citation>
    <scope>VARIANT [LARGE SCALE ANALYSIS] GLY-147</scope>
</reference>
<name>SNX8_HUMAN</name>
<evidence type="ECO:0000250" key="1"/>
<evidence type="ECO:0000255" key="2">
    <source>
        <dbReference type="PROSITE-ProRule" id="PRU00147"/>
    </source>
</evidence>
<evidence type="ECO:0000256" key="3">
    <source>
        <dbReference type="SAM" id="MobiDB-lite"/>
    </source>
</evidence>
<evidence type="ECO:0000269" key="4">
    <source>
    </source>
</evidence>
<evidence type="ECO:0000269" key="5">
    <source>
    </source>
</evidence>
<evidence type="ECO:0000305" key="6"/>
<evidence type="ECO:0007744" key="7">
    <source>
    </source>
</evidence>
<dbReference type="EMBL" id="AF121858">
    <property type="protein sequence ID" value="AAD27831.1"/>
    <property type="molecule type" value="mRNA"/>
</dbReference>
<dbReference type="EMBL" id="CH236953">
    <property type="protein sequence ID" value="EAL23950.1"/>
    <property type="molecule type" value="Genomic_DNA"/>
</dbReference>
<dbReference type="EMBL" id="CH471144">
    <property type="protein sequence ID" value="EAW87235.1"/>
    <property type="molecule type" value="Genomic_DNA"/>
</dbReference>
<dbReference type="EMBL" id="BC007785">
    <property type="protein sequence ID" value="AAH07785.2"/>
    <property type="molecule type" value="mRNA"/>
</dbReference>
<dbReference type="EMBL" id="BC021565">
    <property type="protein sequence ID" value="AAH21565.1"/>
    <property type="molecule type" value="mRNA"/>
</dbReference>
<dbReference type="CCDS" id="CCDS5331.1"/>
<dbReference type="RefSeq" id="NP_037453.1">
    <property type="nucleotide sequence ID" value="NM_013321.4"/>
</dbReference>
<dbReference type="SMR" id="Q9Y5X2"/>
<dbReference type="BioGRID" id="118939">
    <property type="interactions" value="48"/>
</dbReference>
<dbReference type="FunCoup" id="Q9Y5X2">
    <property type="interactions" value="547"/>
</dbReference>
<dbReference type="IntAct" id="Q9Y5X2">
    <property type="interactions" value="29"/>
</dbReference>
<dbReference type="MINT" id="Q9Y5X2"/>
<dbReference type="STRING" id="9606.ENSP00000222990"/>
<dbReference type="TCDB" id="3.A.34.1.1">
    <property type="family name" value="the sorting nexins of the escrt complexes (sn-escrt)"/>
</dbReference>
<dbReference type="GlyGen" id="Q9Y5X2">
    <property type="glycosylation" value="1 site, 1 O-linked glycan (1 site)"/>
</dbReference>
<dbReference type="iPTMnet" id="Q9Y5X2"/>
<dbReference type="PhosphoSitePlus" id="Q9Y5X2"/>
<dbReference type="BioMuta" id="SNX8"/>
<dbReference type="DMDM" id="10720288"/>
<dbReference type="jPOST" id="Q9Y5X2"/>
<dbReference type="MassIVE" id="Q9Y5X2"/>
<dbReference type="PaxDb" id="9606-ENSP00000222990"/>
<dbReference type="PeptideAtlas" id="Q9Y5X2"/>
<dbReference type="ProteomicsDB" id="86527"/>
<dbReference type="Pumba" id="Q9Y5X2"/>
<dbReference type="Antibodypedia" id="24341">
    <property type="antibodies" value="299 antibodies from 28 providers"/>
</dbReference>
<dbReference type="DNASU" id="29886"/>
<dbReference type="Ensembl" id="ENST00000222990.8">
    <property type="protein sequence ID" value="ENSP00000222990.3"/>
    <property type="gene ID" value="ENSG00000106266.11"/>
</dbReference>
<dbReference type="GeneID" id="29886"/>
<dbReference type="KEGG" id="hsa:29886"/>
<dbReference type="MANE-Select" id="ENST00000222990.8">
    <property type="protein sequence ID" value="ENSP00000222990.3"/>
    <property type="RefSeq nucleotide sequence ID" value="NM_013321.4"/>
    <property type="RefSeq protein sequence ID" value="NP_037453.1"/>
</dbReference>
<dbReference type="UCSC" id="uc003slw.3">
    <property type="organism name" value="human"/>
</dbReference>
<dbReference type="AGR" id="HGNC:14972"/>
<dbReference type="CTD" id="29886"/>
<dbReference type="DisGeNET" id="29886"/>
<dbReference type="GeneCards" id="SNX8"/>
<dbReference type="HGNC" id="HGNC:14972">
    <property type="gene designation" value="SNX8"/>
</dbReference>
<dbReference type="HPA" id="ENSG00000106266">
    <property type="expression patterns" value="Low tissue specificity"/>
</dbReference>
<dbReference type="MIM" id="614905">
    <property type="type" value="gene"/>
</dbReference>
<dbReference type="neXtProt" id="NX_Q9Y5X2"/>
<dbReference type="OpenTargets" id="ENSG00000106266"/>
<dbReference type="PharmGKB" id="PA37948"/>
<dbReference type="VEuPathDB" id="HostDB:ENSG00000106266"/>
<dbReference type="eggNOG" id="KOG2273">
    <property type="taxonomic scope" value="Eukaryota"/>
</dbReference>
<dbReference type="GeneTree" id="ENSGT00460000041594"/>
<dbReference type="HOGENOM" id="CLU_042580_0_0_1"/>
<dbReference type="InParanoid" id="Q9Y5X2"/>
<dbReference type="OMA" id="WEYAGAK"/>
<dbReference type="OrthoDB" id="10064318at2759"/>
<dbReference type="PAN-GO" id="Q9Y5X2">
    <property type="GO annotations" value="3 GO annotations based on evolutionary models"/>
</dbReference>
<dbReference type="PhylomeDB" id="Q9Y5X2"/>
<dbReference type="TreeFam" id="TF314082"/>
<dbReference type="PathwayCommons" id="Q9Y5X2"/>
<dbReference type="SignaLink" id="Q9Y5X2"/>
<dbReference type="SIGNOR" id="Q9Y5X2"/>
<dbReference type="BioGRID-ORCS" id="29886">
    <property type="hits" value="21 hits in 1158 CRISPR screens"/>
</dbReference>
<dbReference type="ChiTaRS" id="SNX8">
    <property type="organism name" value="human"/>
</dbReference>
<dbReference type="GenomeRNAi" id="29886"/>
<dbReference type="Pharos" id="Q9Y5X2">
    <property type="development level" value="Tbio"/>
</dbReference>
<dbReference type="PRO" id="PR:Q9Y5X2"/>
<dbReference type="Proteomes" id="UP000005640">
    <property type="component" value="Chromosome 7"/>
</dbReference>
<dbReference type="RNAct" id="Q9Y5X2">
    <property type="molecule type" value="protein"/>
</dbReference>
<dbReference type="Bgee" id="ENSG00000106266">
    <property type="expression patterns" value="Expressed in stromal cell of endometrium and 122 other cell types or tissues"/>
</dbReference>
<dbReference type="ExpressionAtlas" id="Q9Y5X2">
    <property type="expression patterns" value="baseline and differential"/>
</dbReference>
<dbReference type="GO" id="GO:0005829">
    <property type="term" value="C:cytosol"/>
    <property type="evidence" value="ECO:0007669"/>
    <property type="project" value="GOC"/>
</dbReference>
<dbReference type="GO" id="GO:0031901">
    <property type="term" value="C:early endosome membrane"/>
    <property type="evidence" value="ECO:0000314"/>
    <property type="project" value="UniProtKB"/>
</dbReference>
<dbReference type="GO" id="GO:0043231">
    <property type="term" value="C:intracellular membrane-bounded organelle"/>
    <property type="evidence" value="ECO:0000314"/>
    <property type="project" value="HPA"/>
</dbReference>
<dbReference type="GO" id="GO:0042802">
    <property type="term" value="F:identical protein binding"/>
    <property type="evidence" value="ECO:0000353"/>
    <property type="project" value="IntAct"/>
</dbReference>
<dbReference type="GO" id="GO:0035091">
    <property type="term" value="F:phosphatidylinositol binding"/>
    <property type="evidence" value="ECO:0000315"/>
    <property type="project" value="UniProtKB"/>
</dbReference>
<dbReference type="GO" id="GO:0034498">
    <property type="term" value="P:early endosome to Golgi transport"/>
    <property type="evidence" value="ECO:0000315"/>
    <property type="project" value="UniProtKB"/>
</dbReference>
<dbReference type="GO" id="GO:0006886">
    <property type="term" value="P:intracellular protein transport"/>
    <property type="evidence" value="ECO:0000315"/>
    <property type="project" value="UniProtKB"/>
</dbReference>
<dbReference type="CDD" id="cd07597">
    <property type="entry name" value="BAR_SNX8"/>
    <property type="match status" value="1"/>
</dbReference>
<dbReference type="CDD" id="cd06866">
    <property type="entry name" value="PX_SNX8_Mvp1p_like"/>
    <property type="match status" value="1"/>
</dbReference>
<dbReference type="FunFam" id="1.20.1270.60:FF:000049">
    <property type="entry name" value="Sorting nexin 8"/>
    <property type="match status" value="1"/>
</dbReference>
<dbReference type="FunFam" id="3.30.1520.10:FF:000032">
    <property type="entry name" value="Sorting nexin 8"/>
    <property type="match status" value="1"/>
</dbReference>
<dbReference type="Gene3D" id="1.20.1270.60">
    <property type="entry name" value="Arfaptin homology (AH) domain/BAR domain"/>
    <property type="match status" value="1"/>
</dbReference>
<dbReference type="Gene3D" id="3.30.1520.10">
    <property type="entry name" value="Phox-like domain"/>
    <property type="match status" value="1"/>
</dbReference>
<dbReference type="InterPro" id="IPR027267">
    <property type="entry name" value="AH/BAR_dom_sf"/>
</dbReference>
<dbReference type="InterPro" id="IPR001683">
    <property type="entry name" value="PX_dom"/>
</dbReference>
<dbReference type="InterPro" id="IPR036871">
    <property type="entry name" value="PX_dom_sf"/>
</dbReference>
<dbReference type="InterPro" id="IPR028662">
    <property type="entry name" value="SNX8/Mvp1"/>
</dbReference>
<dbReference type="InterPro" id="IPR035704">
    <property type="entry name" value="SNX8/Mvp1_PX"/>
</dbReference>
<dbReference type="InterPro" id="IPR045734">
    <property type="entry name" value="Snx8_BAR_dom"/>
</dbReference>
<dbReference type="PANTHER" id="PTHR46571">
    <property type="entry name" value="SORTING NEXIN-8"/>
    <property type="match status" value="1"/>
</dbReference>
<dbReference type="PANTHER" id="PTHR46571:SF1">
    <property type="entry name" value="SORTING NEXIN-8"/>
    <property type="match status" value="1"/>
</dbReference>
<dbReference type="Pfam" id="PF00787">
    <property type="entry name" value="PX"/>
    <property type="match status" value="1"/>
</dbReference>
<dbReference type="Pfam" id="PF19566">
    <property type="entry name" value="Snx8_BAR_dom"/>
    <property type="match status" value="1"/>
</dbReference>
<dbReference type="SMART" id="SM00312">
    <property type="entry name" value="PX"/>
    <property type="match status" value="1"/>
</dbReference>
<dbReference type="SUPFAM" id="SSF64268">
    <property type="entry name" value="PX domain"/>
    <property type="match status" value="1"/>
</dbReference>
<dbReference type="PROSITE" id="PS50195">
    <property type="entry name" value="PX"/>
    <property type="match status" value="1"/>
</dbReference>
<accession>Q9Y5X2</accession>
<accession>A4D207</accession>
<accession>Q96I67</accession>
<gene>
    <name type="primary">SNX8</name>
</gene>
<comment type="function">
    <text evidence="5">May be involved in several stages of intracellular trafficking. May play a role in intracellular protein transport from early endosomes to the trans-Golgi network.</text>
</comment>
<comment type="interaction">
    <interactant intactId="EBI-1752557">
        <id>Q9Y5X2</id>
    </interactant>
    <interactant intactId="EBI-714543">
        <id>Q15041</id>
        <label>ARL6IP1</label>
    </interactant>
    <organismsDiffer>false</organismsDiffer>
    <experiments>3</experiments>
</comment>
<comment type="interaction">
    <interactant intactId="EBI-1752557">
        <id>Q9Y5X2</id>
    </interactant>
    <interactant intactId="EBI-725606">
        <id>Q9NWQ9</id>
        <label>C14orf119</label>
    </interactant>
    <organismsDiffer>false</organismsDiffer>
    <experiments>3</experiments>
</comment>
<comment type="interaction">
    <interactant intactId="EBI-1752557">
        <id>Q9Y5X2</id>
    </interactant>
    <interactant intactId="EBI-389883">
        <id>P16333</id>
        <label>NCK1</label>
    </interactant>
    <organismsDiffer>false</organismsDiffer>
    <experiments>2</experiments>
</comment>
<comment type="interaction">
    <interactant intactId="EBI-1752557">
        <id>Q9Y5X2</id>
    </interactant>
    <interactant intactId="EBI-712367">
        <id>Q9UI14</id>
        <label>RABAC1</label>
    </interactant>
    <organismsDiffer>false</organismsDiffer>
    <experiments>3</experiments>
</comment>
<comment type="interaction">
    <interactant intactId="EBI-1752557">
        <id>Q9Y5X2</id>
    </interactant>
    <interactant intactId="EBI-14065960">
        <id>Q96HR9-2</id>
        <label>REEP6</label>
    </interactant>
    <organismsDiffer>false</organismsDiffer>
    <experiments>3</experiments>
</comment>
<comment type="interaction">
    <interactant intactId="EBI-1752557">
        <id>Q9Y5X2</id>
    </interactant>
    <interactant intactId="EBI-1752557">
        <id>Q9Y5X2</id>
        <label>SNX8</label>
    </interactant>
    <organismsDiffer>false</organismsDiffer>
    <experiments>2</experiments>
</comment>
<comment type="subcellular location">
    <subcellularLocation>
        <location evidence="5">Early endosome membrane</location>
        <topology evidence="5">Peripheral membrane protein</topology>
        <orientation evidence="5">Cytoplasmic side</orientation>
    </subcellularLocation>
    <text>Colocalizes with retromer components.</text>
</comment>
<comment type="similarity">
    <text evidence="6">Belongs to the sorting nexin family.</text>
</comment>